<reference key="1">
    <citation type="journal article" date="2011" name="J. Bacteriol.">
        <title>Complete genome sequence of the metabolically versatile plant growth-promoting endophyte, Variovorax paradoxus S110.</title>
        <authorList>
            <person name="Han J.I."/>
            <person name="Choi H.K."/>
            <person name="Lee S.W."/>
            <person name="Orwin P.M."/>
            <person name="Kim J."/>
            <person name="Laroe S.L."/>
            <person name="Kim T.G."/>
            <person name="O'Neil J."/>
            <person name="Leadbetter J.R."/>
            <person name="Lee S.Y."/>
            <person name="Hur C.G."/>
            <person name="Spain J.C."/>
            <person name="Ovchinnikova G."/>
            <person name="Goodwin L."/>
            <person name="Han C."/>
        </authorList>
    </citation>
    <scope>NUCLEOTIDE SEQUENCE [LARGE SCALE GENOMIC DNA]</scope>
    <source>
        <strain>S110</strain>
    </source>
</reference>
<gene>
    <name evidence="1" type="primary">tig</name>
    <name type="ordered locus">Vapar_2510</name>
</gene>
<accession>C5CJT3</accession>
<sequence>MTVTVETLEKLERKITLTLPVGTIQSEVDSRLKKLARTVKMDGFRPGKVPMNVVAQRYGYSVHYEVMNDKVGEAFSQAANEAKLRVAGQPRITEKEESPEGQLAFDAVFEVFPEVKINDLSNAEVEKLSAEVGEDAIDKTLDILRKQRRTFAQRAQDAVAQDDDRVTVDFEGKIDGEPFPGGKAEDFQFIVGEGQMLKEFEDAVRGMKAGDSRTFPLSFPADYHGKDVAGKQADFMVTVKKIEASHLPEVNEQLAKSLGIAEATVEGLRADIKKNLEREVKFRLLARNKNAVMDTLVANAELDLPNASVQSEVNRMVEGARAELKQRGIKDADKAPIPDEVFRPQAERRVRLGLVVAELVRANNLQAKPEQIKAHIDELAASYEKPADVVRWYFSDNNRLAEVEAVVIENNVTDFVLGKAKVKEKSVSFDELMAQQG</sequence>
<comment type="function">
    <text evidence="1">Involved in protein export. Acts as a chaperone by maintaining the newly synthesized protein in an open conformation. Functions as a peptidyl-prolyl cis-trans isomerase.</text>
</comment>
<comment type="catalytic activity">
    <reaction evidence="1">
        <text>[protein]-peptidylproline (omega=180) = [protein]-peptidylproline (omega=0)</text>
        <dbReference type="Rhea" id="RHEA:16237"/>
        <dbReference type="Rhea" id="RHEA-COMP:10747"/>
        <dbReference type="Rhea" id="RHEA-COMP:10748"/>
        <dbReference type="ChEBI" id="CHEBI:83833"/>
        <dbReference type="ChEBI" id="CHEBI:83834"/>
        <dbReference type="EC" id="5.2.1.8"/>
    </reaction>
</comment>
<comment type="subcellular location">
    <subcellularLocation>
        <location>Cytoplasm</location>
    </subcellularLocation>
    <text evidence="1">About half TF is bound to the ribosome near the polypeptide exit tunnel while the other half is free in the cytoplasm.</text>
</comment>
<comment type="domain">
    <text evidence="1">Consists of 3 domains; the N-terminus binds the ribosome, the middle domain has PPIase activity, while the C-terminus has intrinsic chaperone activity on its own.</text>
</comment>
<comment type="similarity">
    <text evidence="1">Belongs to the FKBP-type PPIase family. Tig subfamily.</text>
</comment>
<proteinExistence type="inferred from homology"/>
<keyword id="KW-0131">Cell cycle</keyword>
<keyword id="KW-0132">Cell division</keyword>
<keyword id="KW-0143">Chaperone</keyword>
<keyword id="KW-0963">Cytoplasm</keyword>
<keyword id="KW-0413">Isomerase</keyword>
<keyword id="KW-0697">Rotamase</keyword>
<protein>
    <recommendedName>
        <fullName evidence="1">Trigger factor</fullName>
        <shortName evidence="1">TF</shortName>
        <ecNumber evidence="1">5.2.1.8</ecNumber>
    </recommendedName>
    <alternativeName>
        <fullName evidence="1">PPIase</fullName>
    </alternativeName>
</protein>
<organism>
    <name type="scientific">Variovorax paradoxus (strain S110)</name>
    <dbReference type="NCBI Taxonomy" id="543728"/>
    <lineage>
        <taxon>Bacteria</taxon>
        <taxon>Pseudomonadati</taxon>
        <taxon>Pseudomonadota</taxon>
        <taxon>Betaproteobacteria</taxon>
        <taxon>Burkholderiales</taxon>
        <taxon>Comamonadaceae</taxon>
        <taxon>Variovorax</taxon>
    </lineage>
</organism>
<feature type="chain" id="PRO_1000205003" description="Trigger factor">
    <location>
        <begin position="1"/>
        <end position="437"/>
    </location>
</feature>
<feature type="domain" description="PPIase FKBP-type" evidence="1">
    <location>
        <begin position="163"/>
        <end position="248"/>
    </location>
</feature>
<dbReference type="EC" id="5.2.1.8" evidence="1"/>
<dbReference type="EMBL" id="CP001635">
    <property type="protein sequence ID" value="ACS19136.1"/>
    <property type="molecule type" value="Genomic_DNA"/>
</dbReference>
<dbReference type="SMR" id="C5CJT3"/>
<dbReference type="STRING" id="543728.Vapar_2510"/>
<dbReference type="KEGG" id="vap:Vapar_2510"/>
<dbReference type="eggNOG" id="COG0544">
    <property type="taxonomic scope" value="Bacteria"/>
</dbReference>
<dbReference type="HOGENOM" id="CLU_033058_2_0_4"/>
<dbReference type="OrthoDB" id="9767721at2"/>
<dbReference type="GO" id="GO:0005737">
    <property type="term" value="C:cytoplasm"/>
    <property type="evidence" value="ECO:0007669"/>
    <property type="project" value="UniProtKB-SubCell"/>
</dbReference>
<dbReference type="GO" id="GO:0003755">
    <property type="term" value="F:peptidyl-prolyl cis-trans isomerase activity"/>
    <property type="evidence" value="ECO:0007669"/>
    <property type="project" value="UniProtKB-UniRule"/>
</dbReference>
<dbReference type="GO" id="GO:0044183">
    <property type="term" value="F:protein folding chaperone"/>
    <property type="evidence" value="ECO:0007669"/>
    <property type="project" value="TreeGrafter"/>
</dbReference>
<dbReference type="GO" id="GO:0043022">
    <property type="term" value="F:ribosome binding"/>
    <property type="evidence" value="ECO:0007669"/>
    <property type="project" value="TreeGrafter"/>
</dbReference>
<dbReference type="GO" id="GO:0051083">
    <property type="term" value="P:'de novo' cotranslational protein folding"/>
    <property type="evidence" value="ECO:0007669"/>
    <property type="project" value="TreeGrafter"/>
</dbReference>
<dbReference type="GO" id="GO:0051301">
    <property type="term" value="P:cell division"/>
    <property type="evidence" value="ECO:0007669"/>
    <property type="project" value="UniProtKB-KW"/>
</dbReference>
<dbReference type="GO" id="GO:0061077">
    <property type="term" value="P:chaperone-mediated protein folding"/>
    <property type="evidence" value="ECO:0007669"/>
    <property type="project" value="TreeGrafter"/>
</dbReference>
<dbReference type="GO" id="GO:0015031">
    <property type="term" value="P:protein transport"/>
    <property type="evidence" value="ECO:0007669"/>
    <property type="project" value="UniProtKB-UniRule"/>
</dbReference>
<dbReference type="GO" id="GO:0043335">
    <property type="term" value="P:protein unfolding"/>
    <property type="evidence" value="ECO:0007669"/>
    <property type="project" value="TreeGrafter"/>
</dbReference>
<dbReference type="FunFam" id="3.10.50.40:FF:000001">
    <property type="entry name" value="Trigger factor"/>
    <property type="match status" value="1"/>
</dbReference>
<dbReference type="Gene3D" id="3.10.50.40">
    <property type="match status" value="1"/>
</dbReference>
<dbReference type="Gene3D" id="3.30.70.1050">
    <property type="entry name" value="Trigger factor ribosome-binding domain"/>
    <property type="match status" value="1"/>
</dbReference>
<dbReference type="Gene3D" id="1.10.3120.10">
    <property type="entry name" value="Trigger factor, C-terminal domain"/>
    <property type="match status" value="1"/>
</dbReference>
<dbReference type="HAMAP" id="MF_00303">
    <property type="entry name" value="Trigger_factor_Tig"/>
    <property type="match status" value="1"/>
</dbReference>
<dbReference type="InterPro" id="IPR046357">
    <property type="entry name" value="PPIase_dom_sf"/>
</dbReference>
<dbReference type="InterPro" id="IPR001179">
    <property type="entry name" value="PPIase_FKBP_dom"/>
</dbReference>
<dbReference type="InterPro" id="IPR005215">
    <property type="entry name" value="Trig_fac"/>
</dbReference>
<dbReference type="InterPro" id="IPR008880">
    <property type="entry name" value="Trigger_fac_C"/>
</dbReference>
<dbReference type="InterPro" id="IPR037041">
    <property type="entry name" value="Trigger_fac_C_sf"/>
</dbReference>
<dbReference type="InterPro" id="IPR008881">
    <property type="entry name" value="Trigger_fac_ribosome-bd_bac"/>
</dbReference>
<dbReference type="InterPro" id="IPR036611">
    <property type="entry name" value="Trigger_fac_ribosome-bd_sf"/>
</dbReference>
<dbReference type="InterPro" id="IPR027304">
    <property type="entry name" value="Trigger_fact/SurA_dom_sf"/>
</dbReference>
<dbReference type="NCBIfam" id="TIGR00115">
    <property type="entry name" value="tig"/>
    <property type="match status" value="1"/>
</dbReference>
<dbReference type="PANTHER" id="PTHR30560">
    <property type="entry name" value="TRIGGER FACTOR CHAPERONE AND PEPTIDYL-PROLYL CIS/TRANS ISOMERASE"/>
    <property type="match status" value="1"/>
</dbReference>
<dbReference type="PANTHER" id="PTHR30560:SF3">
    <property type="entry name" value="TRIGGER FACTOR-LIKE PROTEIN TIG, CHLOROPLASTIC"/>
    <property type="match status" value="1"/>
</dbReference>
<dbReference type="Pfam" id="PF00254">
    <property type="entry name" value="FKBP_C"/>
    <property type="match status" value="1"/>
</dbReference>
<dbReference type="Pfam" id="PF05698">
    <property type="entry name" value="Trigger_C"/>
    <property type="match status" value="1"/>
</dbReference>
<dbReference type="Pfam" id="PF05697">
    <property type="entry name" value="Trigger_N"/>
    <property type="match status" value="1"/>
</dbReference>
<dbReference type="PIRSF" id="PIRSF003095">
    <property type="entry name" value="Trigger_factor"/>
    <property type="match status" value="1"/>
</dbReference>
<dbReference type="SUPFAM" id="SSF54534">
    <property type="entry name" value="FKBP-like"/>
    <property type="match status" value="1"/>
</dbReference>
<dbReference type="SUPFAM" id="SSF109998">
    <property type="entry name" value="Triger factor/SurA peptide-binding domain-like"/>
    <property type="match status" value="1"/>
</dbReference>
<dbReference type="SUPFAM" id="SSF102735">
    <property type="entry name" value="Trigger factor ribosome-binding domain"/>
    <property type="match status" value="1"/>
</dbReference>
<dbReference type="PROSITE" id="PS50059">
    <property type="entry name" value="FKBP_PPIASE"/>
    <property type="match status" value="1"/>
</dbReference>
<evidence type="ECO:0000255" key="1">
    <source>
        <dbReference type="HAMAP-Rule" id="MF_00303"/>
    </source>
</evidence>
<name>TIG_VARPS</name>